<keyword id="KW-1003">Cell membrane</keyword>
<keyword id="KW-0903">Direct protein sequencing</keyword>
<keyword id="KW-1015">Disulfide bond</keyword>
<keyword id="KW-0325">Glycoprotein</keyword>
<keyword id="KW-0336">GPI-anchor</keyword>
<keyword id="KW-0449">Lipoprotein</keyword>
<keyword id="KW-0472">Membrane</keyword>
<keyword id="KW-1267">Proteomics identification</keyword>
<keyword id="KW-1185">Reference proteome</keyword>
<keyword id="KW-0732">Signal</keyword>
<accession>O43653</accession>
<accession>Q6UW92</accession>
<dbReference type="EMBL" id="AF043498">
    <property type="protein sequence ID" value="AAC39607.1"/>
    <property type="status" value="ALT_INIT"/>
    <property type="molecule type" value="mRNA"/>
</dbReference>
<dbReference type="EMBL" id="AJ297436">
    <property type="protein sequence ID" value="CAB97347.1"/>
    <property type="status" value="ALT_INIT"/>
    <property type="molecule type" value="mRNA"/>
</dbReference>
<dbReference type="EMBL" id="AC108002">
    <property type="status" value="NOT_ANNOTATED_CDS"/>
    <property type="molecule type" value="Genomic_DNA"/>
</dbReference>
<dbReference type="EMBL" id="AY358912">
    <property type="protein sequence ID" value="AAQ89271.1"/>
    <property type="status" value="ALT_INIT"/>
    <property type="molecule type" value="mRNA"/>
</dbReference>
<dbReference type="EMBL" id="BC023582">
    <property type="protein sequence ID" value="AAH23582.1"/>
    <property type="status" value="ALT_INIT"/>
    <property type="molecule type" value="mRNA"/>
</dbReference>
<dbReference type="EMBL" id="BC065183">
    <property type="protein sequence ID" value="AAH65183.1"/>
    <property type="status" value="ALT_INIT"/>
    <property type="molecule type" value="mRNA"/>
</dbReference>
<dbReference type="CCDS" id="CCDS47925.2"/>
<dbReference type="RefSeq" id="NP_005663.2">
    <property type="nucleotide sequence ID" value="NM_005672.5"/>
</dbReference>
<dbReference type="SMR" id="O43653"/>
<dbReference type="FunCoup" id="O43653">
    <property type="interactions" value="88"/>
</dbReference>
<dbReference type="IntAct" id="O43653">
    <property type="interactions" value="101"/>
</dbReference>
<dbReference type="STRING" id="9606.ENSP00000301258"/>
<dbReference type="ChEMBL" id="CHEMBL3712961"/>
<dbReference type="DrugBank" id="DB05933">
    <property type="generic name" value="MK-4721"/>
</dbReference>
<dbReference type="GlyCosmos" id="O43653">
    <property type="glycosylation" value="1 site, No reported glycans"/>
</dbReference>
<dbReference type="GlyGen" id="O43653">
    <property type="glycosylation" value="2 sites, 1 O-linked glycan (1 site)"/>
</dbReference>
<dbReference type="iPTMnet" id="O43653"/>
<dbReference type="PhosphoSitePlus" id="O43653"/>
<dbReference type="BioMuta" id="PSCA"/>
<dbReference type="jPOST" id="O43653"/>
<dbReference type="MassIVE" id="O43653"/>
<dbReference type="PaxDb" id="9606-ENSP00000301258"/>
<dbReference type="PeptideAtlas" id="O43653"/>
<dbReference type="ProteomicsDB" id="49089"/>
<dbReference type="Pumba" id="O43653"/>
<dbReference type="Antibodypedia" id="7385">
    <property type="antibodies" value="409 antibodies from 39 providers"/>
</dbReference>
<dbReference type="DNASU" id="8000"/>
<dbReference type="Ensembl" id="ENST00000301258.5">
    <property type="protein sequence ID" value="ENSP00000301258.4"/>
    <property type="gene ID" value="ENSG00000167653.5"/>
</dbReference>
<dbReference type="GeneID" id="8000"/>
<dbReference type="KEGG" id="hsa:8000"/>
<dbReference type="MANE-Select" id="ENST00000301258.5">
    <property type="protein sequence ID" value="ENSP00000301258.4"/>
    <property type="RefSeq nucleotide sequence ID" value="NM_005672.5"/>
    <property type="RefSeq protein sequence ID" value="NP_005663.2"/>
</dbReference>
<dbReference type="UCSC" id="uc003ywu.4">
    <property type="organism name" value="human"/>
</dbReference>
<dbReference type="AGR" id="HGNC:9500"/>
<dbReference type="CTD" id="8000"/>
<dbReference type="DisGeNET" id="8000"/>
<dbReference type="GeneCards" id="PSCA"/>
<dbReference type="HGNC" id="HGNC:9500">
    <property type="gene designation" value="PSCA"/>
</dbReference>
<dbReference type="HPA" id="ENSG00000167653">
    <property type="expression patterns" value="Tissue enriched (stomach)"/>
</dbReference>
<dbReference type="MIM" id="602470">
    <property type="type" value="gene"/>
</dbReference>
<dbReference type="neXtProt" id="NX_O43653"/>
<dbReference type="OpenTargets" id="ENSG00000167653"/>
<dbReference type="VEuPathDB" id="HostDB:ENSG00000167653"/>
<dbReference type="eggNOG" id="ENOG502SCWD">
    <property type="taxonomic scope" value="Eukaryota"/>
</dbReference>
<dbReference type="GeneTree" id="ENSGT00940000153378"/>
<dbReference type="HOGENOM" id="CLU_141358_1_0_1"/>
<dbReference type="InParanoid" id="O43653"/>
<dbReference type="OMA" id="ISKGCTS"/>
<dbReference type="OrthoDB" id="5945173at2759"/>
<dbReference type="PAN-GO" id="O43653">
    <property type="GO annotations" value="2 GO annotations based on evolutionary models"/>
</dbReference>
<dbReference type="PhylomeDB" id="O43653"/>
<dbReference type="TreeFam" id="TF336080"/>
<dbReference type="PathwayCommons" id="O43653"/>
<dbReference type="Reactome" id="R-HSA-163125">
    <property type="pathway name" value="Post-translational modification: synthesis of GPI-anchored proteins"/>
</dbReference>
<dbReference type="SignaLink" id="O43653"/>
<dbReference type="ChiTaRS" id="PSCA">
    <property type="organism name" value="human"/>
</dbReference>
<dbReference type="Pharos" id="O43653">
    <property type="development level" value="Tbio"/>
</dbReference>
<dbReference type="PRO" id="PR:O43653"/>
<dbReference type="Proteomes" id="UP000005640">
    <property type="component" value="Chromosome 8"/>
</dbReference>
<dbReference type="RNAct" id="O43653">
    <property type="molecule type" value="protein"/>
</dbReference>
<dbReference type="Bgee" id="ENSG00000167653">
    <property type="expression patterns" value="Expressed in lower esophagus mucosa and 94 other cell types or tissues"/>
</dbReference>
<dbReference type="ExpressionAtlas" id="O43653">
    <property type="expression patterns" value="baseline and differential"/>
</dbReference>
<dbReference type="GO" id="GO:0070062">
    <property type="term" value="C:extracellular exosome"/>
    <property type="evidence" value="ECO:0007005"/>
    <property type="project" value="UniProtKB"/>
</dbReference>
<dbReference type="GO" id="GO:0005576">
    <property type="term" value="C:extracellular region"/>
    <property type="evidence" value="ECO:0000304"/>
    <property type="project" value="Reactome"/>
</dbReference>
<dbReference type="GO" id="GO:0005886">
    <property type="term" value="C:plasma membrane"/>
    <property type="evidence" value="ECO:0000314"/>
    <property type="project" value="HPA"/>
</dbReference>
<dbReference type="GO" id="GO:0098552">
    <property type="term" value="C:side of membrane"/>
    <property type="evidence" value="ECO:0007669"/>
    <property type="project" value="UniProtKB-KW"/>
</dbReference>
<dbReference type="GO" id="GO:0045202">
    <property type="term" value="C:synapse"/>
    <property type="evidence" value="ECO:0007669"/>
    <property type="project" value="GOC"/>
</dbReference>
<dbReference type="GO" id="GO:0033130">
    <property type="term" value="F:acetylcholine receptor binding"/>
    <property type="evidence" value="ECO:0000314"/>
    <property type="project" value="UniProtKB"/>
</dbReference>
<dbReference type="GO" id="GO:0030548">
    <property type="term" value="F:acetylcholine receptor regulator activity"/>
    <property type="evidence" value="ECO:0000318"/>
    <property type="project" value="GO_Central"/>
</dbReference>
<dbReference type="GO" id="GO:0095500">
    <property type="term" value="P:acetylcholine receptor signaling pathway"/>
    <property type="evidence" value="ECO:0000318"/>
    <property type="project" value="GO_Central"/>
</dbReference>
<dbReference type="GO" id="GO:0070373">
    <property type="term" value="P:negative regulation of ERK1 and ERK2 cascade"/>
    <property type="evidence" value="ECO:0000314"/>
    <property type="project" value="UniProtKB"/>
</dbReference>
<dbReference type="GO" id="GO:0099601">
    <property type="term" value="P:regulation of neurotransmitter receptor activity"/>
    <property type="evidence" value="ECO:0000314"/>
    <property type="project" value="UniProtKB"/>
</dbReference>
<dbReference type="CDD" id="cd23573">
    <property type="entry name" value="TFP_LU_ECD_PSCA"/>
    <property type="match status" value="1"/>
</dbReference>
<dbReference type="FunFam" id="2.10.60.10:FF:000003">
    <property type="entry name" value="lymphocyte antigen 6E isoform X1"/>
    <property type="match status" value="1"/>
</dbReference>
<dbReference type="Gene3D" id="2.10.60.10">
    <property type="entry name" value="CD59"/>
    <property type="match status" value="1"/>
</dbReference>
<dbReference type="InterPro" id="IPR051110">
    <property type="entry name" value="Ly-6/neurotoxin-like_GPI-ap"/>
</dbReference>
<dbReference type="InterPro" id="IPR016054">
    <property type="entry name" value="LY6_UPA_recep-like"/>
</dbReference>
<dbReference type="InterPro" id="IPR045860">
    <property type="entry name" value="Snake_toxin-like_sf"/>
</dbReference>
<dbReference type="InterPro" id="IPR035076">
    <property type="entry name" value="Toxin/TOLIP"/>
</dbReference>
<dbReference type="PANTHER" id="PTHR16983:SF1">
    <property type="entry name" value="PROSTATE STEM CELL ANTIGEN"/>
    <property type="match status" value="1"/>
</dbReference>
<dbReference type="PANTHER" id="PTHR16983">
    <property type="entry name" value="UPAR/LY6 DOMAIN-CONTAINING PROTEIN"/>
    <property type="match status" value="1"/>
</dbReference>
<dbReference type="Pfam" id="PF00087">
    <property type="entry name" value="Toxin_TOLIP"/>
    <property type="match status" value="1"/>
</dbReference>
<dbReference type="SMART" id="SM00134">
    <property type="entry name" value="LU"/>
    <property type="match status" value="1"/>
</dbReference>
<dbReference type="SUPFAM" id="SSF57302">
    <property type="entry name" value="Snake toxin-like"/>
    <property type="match status" value="1"/>
</dbReference>
<comment type="function">
    <text evidence="5">May be involved in the regulation of cell proliferation. Has a cell-proliferation inhibition activity in vitro.</text>
</comment>
<comment type="function">
    <text evidence="10">May act as a modulator of nicotinic acetylcholine receptors (nAChRs) activity. In vitro inhibits nicotine-induced signaling probably implicating alpha-3:beta-2- or alpha-7-containing nAChRs.</text>
</comment>
<comment type="subunit">
    <text evidence="7">Interacts with CHRNA4.</text>
</comment>
<comment type="subcellular location">
    <subcellularLocation>
        <location evidence="8">Cell membrane</location>
        <topology evidence="8">Lipid-anchor</topology>
        <topology evidence="8">GPI-anchor</topology>
    </subcellularLocation>
</comment>
<comment type="tissue specificity">
    <text evidence="3 5 7">Highly expressed in prostate (basal, secretory and neuroendocrine epithelium cells). Also found in bladder (transitional epithelium), placenta (trophoblasts), stomach (neuroendocrine cells), colon (neuroendocrine cells) and kidney (collecting ducts). Overexpressed in prostate cancers and expression is correlated with tumor stage, grade and androgen-independence. Highly expressed in prostate cancer bone metastases. Expressed in gastric epithelial cells, mainly in the isthmus (at protein level). Not detected in normal intestinal epithelium (at protein level). Expressed in brain cortex; expression is significantly increased in the front cortex of Alzheimer disease patients.</text>
</comment>
<comment type="induction">
    <text evidence="5">Down-regulated in gastric cancer cells.</text>
</comment>
<comment type="PTM">
    <text evidence="8">N-glycosylated.</text>
</comment>
<comment type="polymorphism">
    <text evidence="5 6">Genetic variations in PSCA may influence susceptibility to some cancers. A polymorphism gives rise to an upstream methionine which produces a longer protein of 123 residues associated with various cancers including diffuse-type gastric cancer and urinary bladder cancer.</text>
</comment>
<comment type="sequence caution" evidence="9">
    <conflict type="erroneous initiation">
        <sequence resource="EMBL-CDS" id="AAC39607"/>
    </conflict>
    <text>Extended N-terminus.</text>
</comment>
<comment type="sequence caution" evidence="9">
    <conflict type="erroneous initiation">
        <sequence resource="EMBL-CDS" id="AAH23582"/>
    </conflict>
    <text>Extended N-terminus.</text>
</comment>
<comment type="sequence caution" evidence="9">
    <conflict type="erroneous initiation">
        <sequence resource="EMBL-CDS" id="AAH65183"/>
    </conflict>
    <text>Extended N-terminus.</text>
</comment>
<comment type="sequence caution" evidence="9">
    <conflict type="erroneous initiation">
        <sequence resource="EMBL-CDS" id="AAQ89271"/>
    </conflict>
    <text>Extended N-terminus.</text>
</comment>
<comment type="sequence caution" evidence="9">
    <conflict type="erroneous initiation">
        <sequence resource="EMBL-CDS" id="CAB97347"/>
    </conflict>
    <text>Extended N-terminus.</text>
</comment>
<comment type="online information" name="Atlas of Genetics and Cytogenetics in Oncology and Haematology">
    <link uri="https://atlasgeneticsoncology.org/gene/41881/PSCA"/>
</comment>
<feature type="signal peptide" evidence="4">
    <location>
        <begin position="1"/>
        <end position="11"/>
    </location>
</feature>
<feature type="chain" id="PRO_0000036162" description="Prostate stem cell antigen">
    <location>
        <begin position="12"/>
        <end position="86"/>
    </location>
</feature>
<feature type="propeptide" id="PRO_0000036163" description="Removed in mature form" evidence="2">
    <location>
        <begin position="86"/>
        <end position="114"/>
    </location>
</feature>
<feature type="domain" description="UPAR/Ly6">
    <location>
        <begin position="12"/>
        <end position="86"/>
    </location>
</feature>
<feature type="lipid moiety-binding region" description="GPI-anchor amidated serine" evidence="2">
    <location>
        <position position="86"/>
    </location>
</feature>
<feature type="glycosylation site" description="N-linked (GlcNAc...) asparagine" evidence="2">
    <location>
        <position position="31"/>
    </location>
</feature>
<feature type="disulfide bond" evidence="1">
    <location>
        <begin position="14"/>
        <end position="39"/>
    </location>
</feature>
<feature type="disulfide bond" evidence="1">
    <location>
        <begin position="17"/>
        <end position="26"/>
    </location>
</feature>
<feature type="disulfide bond" evidence="1">
    <location>
        <begin position="32"/>
        <end position="57"/>
    </location>
</feature>
<feature type="disulfide bond" evidence="1">
    <location>
        <begin position="61"/>
        <end position="77"/>
    </location>
</feature>
<feature type="disulfide bond" evidence="1">
    <location>
        <begin position="78"/>
        <end position="83"/>
    </location>
</feature>
<feature type="sequence variant" id="VAR_080777" description="In dbSNP:rs2294008." evidence="5 6">
    <original>M</original>
    <variation>MKAVLLALLM</variation>
    <location>
        <position position="1"/>
    </location>
</feature>
<feature type="sequence variant" id="VAR_020173" description="In dbSNP:rs3736001." evidence="5">
    <original>E</original>
    <variation>K</variation>
    <location>
        <position position="30"/>
    </location>
</feature>
<feature type="sequence conflict" description="In Ref. 3; AC108002." evidence="9" ref="3">
    <original>M</original>
    <variation>T</variation>
    <location>
        <position position="1"/>
    </location>
</feature>
<proteinExistence type="evidence at protein level"/>
<protein>
    <recommendedName>
        <fullName>Prostate stem cell antigen</fullName>
    </recommendedName>
</protein>
<gene>
    <name type="primary">PSCA</name>
    <name type="ORF">UNQ206/PRO232</name>
</gene>
<evidence type="ECO:0000250" key="1">
    <source>
        <dbReference type="UniProtKB" id="P0DP57"/>
    </source>
</evidence>
<evidence type="ECO:0000255" key="2"/>
<evidence type="ECO:0000269" key="3">
    <source>
    </source>
</evidence>
<evidence type="ECO:0000269" key="4">
    <source>
    </source>
</evidence>
<evidence type="ECO:0000269" key="5">
    <source>
    </source>
</evidence>
<evidence type="ECO:0000269" key="6">
    <source>
    </source>
</evidence>
<evidence type="ECO:0000269" key="7">
    <source>
    </source>
</evidence>
<evidence type="ECO:0000269" key="8">
    <source>
    </source>
</evidence>
<evidence type="ECO:0000305" key="9"/>
<evidence type="ECO:0000305" key="10">
    <source>
    </source>
</evidence>
<sequence>MAGLALQPGTALLCYSCKAQVSNEDCLQVENCTQLGEQCWTARIRAVGLLTVISKGCSLNCVDDSQDYYVGKKNITCCDTDLCNASGAHALQPAAAILALLPALGLLLWGPGQL</sequence>
<reference key="1">
    <citation type="journal article" date="1998" name="Proc. Natl. Acad. Sci. U.S.A.">
        <title>Prostate stem cell antigen: a cell surface marker overexpressed in prostate cancer.</title>
        <authorList>
            <person name="Reiter R.E."/>
            <person name="Gu Z."/>
            <person name="Watabe T."/>
            <person name="Thomas G."/>
            <person name="Szigeti K."/>
            <person name="Davis E."/>
            <person name="Wahl M."/>
            <person name="Nisitani S."/>
            <person name="Yamashiro J."/>
            <person name="le Beau M.M."/>
            <person name="Losa M."/>
            <person name="Witte O.N."/>
        </authorList>
    </citation>
    <scope>NUCLEOTIDE SEQUENCE [MRNA]</scope>
    <scope>SUBCELLULAR LOCATION</scope>
    <scope>GLYCOSYLATION</scope>
    <source>
        <tissue>Prostatic carcinoma</tissue>
    </source>
</reference>
<reference key="2">
    <citation type="journal article" date="2000" name="Biochem. Biophys. Res. Commun.">
        <title>Reduced expression of PSCA, a member of the LY-6 family of cell surface antigens, in bladder, esophagus, and stomach tumors.</title>
        <authorList>
            <person name="Bahrenberg G."/>
            <person name="Brauers A."/>
            <person name="Joost H.G."/>
            <person name="Jakse G."/>
        </authorList>
    </citation>
    <scope>NUCLEOTIDE SEQUENCE [MRNA]</scope>
    <source>
        <tissue>Urothelium</tissue>
    </source>
</reference>
<reference key="3">
    <citation type="journal article" date="2006" name="Nature">
        <title>DNA sequence and analysis of human chromosome 8.</title>
        <authorList>
            <person name="Nusbaum C."/>
            <person name="Mikkelsen T.S."/>
            <person name="Zody M.C."/>
            <person name="Asakawa S."/>
            <person name="Taudien S."/>
            <person name="Garber M."/>
            <person name="Kodira C.D."/>
            <person name="Schueler M.G."/>
            <person name="Shimizu A."/>
            <person name="Whittaker C.A."/>
            <person name="Chang J.L."/>
            <person name="Cuomo C.A."/>
            <person name="Dewar K."/>
            <person name="FitzGerald M.G."/>
            <person name="Yang X."/>
            <person name="Allen N.R."/>
            <person name="Anderson S."/>
            <person name="Asakawa T."/>
            <person name="Blechschmidt K."/>
            <person name="Bloom T."/>
            <person name="Borowsky M.L."/>
            <person name="Butler J."/>
            <person name="Cook A."/>
            <person name="Corum B."/>
            <person name="DeArellano K."/>
            <person name="DeCaprio D."/>
            <person name="Dooley K.T."/>
            <person name="Dorris L. III"/>
            <person name="Engels R."/>
            <person name="Gloeckner G."/>
            <person name="Hafez N."/>
            <person name="Hagopian D.S."/>
            <person name="Hall J.L."/>
            <person name="Ishikawa S.K."/>
            <person name="Jaffe D.B."/>
            <person name="Kamat A."/>
            <person name="Kudoh J."/>
            <person name="Lehmann R."/>
            <person name="Lokitsang T."/>
            <person name="Macdonald P."/>
            <person name="Major J.E."/>
            <person name="Matthews C.D."/>
            <person name="Mauceli E."/>
            <person name="Menzel U."/>
            <person name="Mihalev A.H."/>
            <person name="Minoshima S."/>
            <person name="Murayama Y."/>
            <person name="Naylor J.W."/>
            <person name="Nicol R."/>
            <person name="Nguyen C."/>
            <person name="O'Leary S.B."/>
            <person name="O'Neill K."/>
            <person name="Parker S.C.J."/>
            <person name="Polley A."/>
            <person name="Raymond C.K."/>
            <person name="Reichwald K."/>
            <person name="Rodriguez J."/>
            <person name="Sasaki T."/>
            <person name="Schilhabel M."/>
            <person name="Siddiqui R."/>
            <person name="Smith C.L."/>
            <person name="Sneddon T.P."/>
            <person name="Talamas J.A."/>
            <person name="Tenzin P."/>
            <person name="Topham K."/>
            <person name="Venkataraman V."/>
            <person name="Wen G."/>
            <person name="Yamazaki S."/>
            <person name="Young S.K."/>
            <person name="Zeng Q."/>
            <person name="Zimmer A.R."/>
            <person name="Rosenthal A."/>
            <person name="Birren B.W."/>
            <person name="Platzer M."/>
            <person name="Shimizu N."/>
            <person name="Lander E.S."/>
        </authorList>
    </citation>
    <scope>NUCLEOTIDE SEQUENCE [LARGE SCALE GENOMIC DNA]</scope>
</reference>
<reference key="4">
    <citation type="journal article" date="2003" name="Genome Res.">
        <title>The secreted protein discovery initiative (SPDI), a large-scale effort to identify novel human secreted and transmembrane proteins: a bioinformatics assessment.</title>
        <authorList>
            <person name="Clark H.F."/>
            <person name="Gurney A.L."/>
            <person name="Abaya E."/>
            <person name="Baker K."/>
            <person name="Baldwin D.T."/>
            <person name="Brush J."/>
            <person name="Chen J."/>
            <person name="Chow B."/>
            <person name="Chui C."/>
            <person name="Crowley C."/>
            <person name="Currell B."/>
            <person name="Deuel B."/>
            <person name="Dowd P."/>
            <person name="Eaton D."/>
            <person name="Foster J.S."/>
            <person name="Grimaldi C."/>
            <person name="Gu Q."/>
            <person name="Hass P.E."/>
            <person name="Heldens S."/>
            <person name="Huang A."/>
            <person name="Kim H.S."/>
            <person name="Klimowski L."/>
            <person name="Jin Y."/>
            <person name="Johnson S."/>
            <person name="Lee J."/>
            <person name="Lewis L."/>
            <person name="Liao D."/>
            <person name="Mark M.R."/>
            <person name="Robbie E."/>
            <person name="Sanchez C."/>
            <person name="Schoenfeld J."/>
            <person name="Seshagiri S."/>
            <person name="Simmons L."/>
            <person name="Singh J."/>
            <person name="Smith V."/>
            <person name="Stinson J."/>
            <person name="Vagts A."/>
            <person name="Vandlen R.L."/>
            <person name="Watanabe C."/>
            <person name="Wieand D."/>
            <person name="Woods K."/>
            <person name="Xie M.-H."/>
            <person name="Yansura D.G."/>
            <person name="Yi S."/>
            <person name="Yu G."/>
            <person name="Yuan J."/>
            <person name="Zhang M."/>
            <person name="Zhang Z."/>
            <person name="Goddard A.D."/>
            <person name="Wood W.I."/>
            <person name="Godowski P.J."/>
            <person name="Gray A.M."/>
        </authorList>
    </citation>
    <scope>NUCLEOTIDE SEQUENCE [LARGE SCALE MRNA]</scope>
</reference>
<reference key="5">
    <citation type="journal article" date="2004" name="Genome Res.">
        <title>The status, quality, and expansion of the NIH full-length cDNA project: the Mammalian Gene Collection (MGC).</title>
        <authorList>
            <consortium name="The MGC Project Team"/>
        </authorList>
    </citation>
    <scope>NUCLEOTIDE SEQUENCE [LARGE SCALE MRNA]</scope>
    <source>
        <tissue>Melanoma</tissue>
    </source>
</reference>
<reference key="6">
    <citation type="journal article" date="2004" name="Protein Sci.">
        <title>Signal peptide prediction based on analysis of experimentally verified cleavage sites.</title>
        <authorList>
            <person name="Zhang Z."/>
            <person name="Henzel W.J."/>
        </authorList>
    </citation>
    <scope>PROTEIN SEQUENCE OF 12-26</scope>
</reference>
<reference key="7">
    <citation type="journal article" date="2000" name="Oncogene">
        <title>Prostate stem cell antigen (PSCA) expression increases with high gleason score, advanced stage and bone metastasis in prostate cancer.</title>
        <authorList>
            <person name="Gu Z."/>
            <person name="Thomas G."/>
            <person name="Yamashiro J."/>
            <person name="Shintaku I.P."/>
            <person name="Dorey F."/>
            <person name="Raitano A."/>
            <person name="Witte O.N."/>
            <person name="Said J.W."/>
            <person name="Loda M."/>
            <person name="Reiter R.E."/>
        </authorList>
    </citation>
    <scope>TISSUE SPECIFICITY</scope>
</reference>
<reference key="8">
    <citation type="journal article" date="2008" name="Nat. Genet.">
        <title>Genetic variation in PSCA is associated with susceptibility to diffuse-type gastric cancer.</title>
        <authorList>
            <consortium name="The study group of millennium genome project for cancer"/>
            <person name="Sakamoto H."/>
            <person name="Yoshimura K."/>
            <person name="Saeki N."/>
            <person name="Katai H."/>
            <person name="Shimoda T."/>
            <person name="Matsuno Y."/>
            <person name="Saito D."/>
            <person name="Sugimura H."/>
            <person name="Tanioka F."/>
            <person name="Kato S."/>
            <person name="Matsukura N."/>
            <person name="Matsuda N."/>
            <person name="Nakamura T."/>
            <person name="Hyodo I."/>
            <person name="Nishina T."/>
            <person name="Yasui W."/>
            <person name="Hirose H."/>
            <person name="Hayashi M."/>
            <person name="Toshiro E."/>
            <person name="Ohnami S."/>
            <person name="Sekine A."/>
            <person name="Sato Y."/>
            <person name="Totsuka H."/>
            <person name="Ando M."/>
            <person name="Takemura R."/>
            <person name="Takahashi Y."/>
            <person name="Ohdaira M."/>
            <person name="Aoki K."/>
            <person name="Honmyo I."/>
            <person name="Chiku S."/>
            <person name="Aoyagi K."/>
            <person name="Sasaki H."/>
            <person name="Ohnami S."/>
            <person name="Yanagihara K."/>
            <person name="Yoon K.-A."/>
            <person name="Kook M.-C."/>
            <person name="Lee Y.-S."/>
            <person name="Park S.R."/>
            <person name="Kim C.G."/>
            <person name="Choi I.J."/>
            <person name="Yoshida T."/>
            <person name="Nakamura Y."/>
            <person name="Hirohashi S."/>
        </authorList>
    </citation>
    <scope>FUNCTION</scope>
    <scope>TISSUE SPECIFICITY</scope>
    <scope>INDUCTION</scope>
    <scope>ASSOCIATION WITH SUSCEPTIBILITY TO DIFFUSE-TYPE GASTRIC CANCER</scope>
    <scope>VARIANT LYS-30</scope>
</reference>
<reference key="9">
    <citation type="journal article" date="2009" name="Nat. Genet.">
        <title>Genetic variation in the prostate stem cell antigen gene PSCA confers susceptibility to urinary bladder cancer.</title>
        <authorList>
            <person name="Wu X."/>
            <person name="Ye Y."/>
            <person name="Kiemeney L.A."/>
            <person name="Sulem P."/>
            <person name="Rafnar T."/>
            <person name="Matullo G."/>
            <person name="Seminara D."/>
            <person name="Yoshida T."/>
            <person name="Saeki N."/>
            <person name="Andrew A.S."/>
            <person name="Dinney C.P."/>
            <person name="Czerniak B."/>
            <person name="Zhang Z.F."/>
            <person name="Kiltie A.E."/>
            <person name="Bishop D.T."/>
            <person name="Vineis P."/>
            <person name="Porru S."/>
            <person name="Buntinx F."/>
            <person name="Kellen E."/>
            <person name="Zeegers M.P."/>
            <person name="Kumar R."/>
            <person name="Rudnai P."/>
            <person name="Gurzau E."/>
            <person name="Koppova K."/>
            <person name="Mayordomo J.I."/>
            <person name="Sanchez M."/>
            <person name="Saez B."/>
            <person name="Lindblom A."/>
            <person name="de Verdier P."/>
            <person name="Steineck G."/>
            <person name="Mills G.B."/>
            <person name="Schned A."/>
            <person name="Guarrera S."/>
            <person name="Polidoro S."/>
            <person name="Chang S.C."/>
            <person name="Lin J."/>
            <person name="Chang D.W."/>
            <person name="Hale K.S."/>
            <person name="Majewski T."/>
            <person name="Grossman H.B."/>
            <person name="Thorlacius S."/>
            <person name="Thorsteinsdottir U."/>
            <person name="Aben K.K."/>
            <person name="Witjes J.A."/>
            <person name="Stefansson K."/>
            <person name="Amos C.I."/>
            <person name="Karagas M.R."/>
            <person name="Gu J."/>
        </authorList>
    </citation>
    <scope>ASSOCIATION WITH SUSCEPTIBILITY TO URINARY BLADDER CANCER</scope>
</reference>
<reference key="10">
    <citation type="journal article" date="2015" name="Neurobiol. Aging">
        <title>Prostate stem cell antigen interacts with nicotinic acetylcholine receptors and is affected in Alzheimer's disease.</title>
        <authorList>
            <person name="Jensen M.M."/>
            <person name="Arvaniti M."/>
            <person name="Mikkelsen J.D."/>
            <person name="Michalski D."/>
            <person name="Pinborg L.H."/>
            <person name="Haertig W."/>
            <person name="Thomsen M.S."/>
        </authorList>
    </citation>
    <scope>FUNCTION</scope>
    <scope>INTERACTION WITH CHRNA4</scope>
    <scope>TISSUE SPECIFICITY</scope>
</reference>
<organism>
    <name type="scientific">Homo sapiens</name>
    <name type="common">Human</name>
    <dbReference type="NCBI Taxonomy" id="9606"/>
    <lineage>
        <taxon>Eukaryota</taxon>
        <taxon>Metazoa</taxon>
        <taxon>Chordata</taxon>
        <taxon>Craniata</taxon>
        <taxon>Vertebrata</taxon>
        <taxon>Euteleostomi</taxon>
        <taxon>Mammalia</taxon>
        <taxon>Eutheria</taxon>
        <taxon>Euarchontoglires</taxon>
        <taxon>Primates</taxon>
        <taxon>Haplorrhini</taxon>
        <taxon>Catarrhini</taxon>
        <taxon>Hominidae</taxon>
        <taxon>Homo</taxon>
    </lineage>
</organism>
<name>PSCA_HUMAN</name>